<dbReference type="EMBL" id="CP000029">
    <property type="protein sequence ID" value="AAW53831.1"/>
    <property type="molecule type" value="Genomic_DNA"/>
</dbReference>
<dbReference type="RefSeq" id="WP_002457221.1">
    <property type="nucleotide sequence ID" value="NC_002976.3"/>
</dbReference>
<dbReference type="SMR" id="Q5HQR8"/>
<dbReference type="STRING" id="176279.SERP0480"/>
<dbReference type="KEGG" id="ser:SERP0480"/>
<dbReference type="eggNOG" id="COG1764">
    <property type="taxonomic scope" value="Bacteria"/>
</dbReference>
<dbReference type="HOGENOM" id="CLU_106355_2_1_9"/>
<dbReference type="Proteomes" id="UP000000531">
    <property type="component" value="Chromosome"/>
</dbReference>
<dbReference type="GO" id="GO:0006979">
    <property type="term" value="P:response to oxidative stress"/>
    <property type="evidence" value="ECO:0007669"/>
    <property type="project" value="InterPro"/>
</dbReference>
<dbReference type="Gene3D" id="2.20.25.10">
    <property type="match status" value="1"/>
</dbReference>
<dbReference type="Gene3D" id="3.30.300.20">
    <property type="match status" value="1"/>
</dbReference>
<dbReference type="InterPro" id="IPR015946">
    <property type="entry name" value="KH_dom-like_a/b"/>
</dbReference>
<dbReference type="InterPro" id="IPR019953">
    <property type="entry name" value="OHR"/>
</dbReference>
<dbReference type="InterPro" id="IPR003718">
    <property type="entry name" value="OsmC/Ohr_fam"/>
</dbReference>
<dbReference type="InterPro" id="IPR036102">
    <property type="entry name" value="OsmC/Ohrsf"/>
</dbReference>
<dbReference type="NCBIfam" id="TIGR03561">
    <property type="entry name" value="organ_hyd_perox"/>
    <property type="match status" value="1"/>
</dbReference>
<dbReference type="PANTHER" id="PTHR33797">
    <property type="entry name" value="ORGANIC HYDROPEROXIDE RESISTANCE PROTEIN-LIKE"/>
    <property type="match status" value="1"/>
</dbReference>
<dbReference type="PANTHER" id="PTHR33797:SF2">
    <property type="entry name" value="ORGANIC HYDROPEROXIDE RESISTANCE PROTEIN-LIKE"/>
    <property type="match status" value="1"/>
</dbReference>
<dbReference type="Pfam" id="PF02566">
    <property type="entry name" value="OsmC"/>
    <property type="match status" value="1"/>
</dbReference>
<dbReference type="SUPFAM" id="SSF82784">
    <property type="entry name" value="OsmC-like"/>
    <property type="match status" value="1"/>
</dbReference>
<comment type="similarity">
    <text evidence="1">Belongs to the OsmC/Ohr family.</text>
</comment>
<proteinExistence type="inferred from homology"/>
<gene>
    <name type="ordered locus">SERP0480</name>
</gene>
<organism>
    <name type="scientific">Staphylococcus epidermidis (strain ATCC 35984 / DSM 28319 / BCRC 17069 / CCUG 31568 / BM 3577 / RP62A)</name>
    <dbReference type="NCBI Taxonomy" id="176279"/>
    <lineage>
        <taxon>Bacteria</taxon>
        <taxon>Bacillati</taxon>
        <taxon>Bacillota</taxon>
        <taxon>Bacilli</taxon>
        <taxon>Bacillales</taxon>
        <taxon>Staphylococcaceae</taxon>
        <taxon>Staphylococcus</taxon>
    </lineage>
</organism>
<protein>
    <recommendedName>
        <fullName>Organic hydroperoxide resistance protein-like 1</fullName>
    </recommendedName>
</protein>
<feature type="chain" id="PRO_0000288966" description="Organic hydroperoxide resistance protein-like 1">
    <location>
        <begin position="1"/>
        <end position="140"/>
    </location>
</feature>
<name>OHRL1_STAEQ</name>
<accession>Q5HQR8</accession>
<sequence length="140" mass="15352">MAVQYETKATNVGGRKGHVHTDDNAINVDVLPPQQADGKATNPEQLFAAGYASCFNGAFDLILKQNKVRDAEPEVTLTVRLEDDPDAESPKLSVDIHAKVKNVLSQEDAEKYLQDAHDFCPYSKATRGNIDVNLNVEVVE</sequence>
<evidence type="ECO:0000305" key="1"/>
<reference key="1">
    <citation type="journal article" date="2005" name="J. Bacteriol.">
        <title>Insights on evolution of virulence and resistance from the complete genome analysis of an early methicillin-resistant Staphylococcus aureus strain and a biofilm-producing methicillin-resistant Staphylococcus epidermidis strain.</title>
        <authorList>
            <person name="Gill S.R."/>
            <person name="Fouts D.E."/>
            <person name="Archer G.L."/>
            <person name="Mongodin E.F."/>
            <person name="DeBoy R.T."/>
            <person name="Ravel J."/>
            <person name="Paulsen I.T."/>
            <person name="Kolonay J.F."/>
            <person name="Brinkac L.M."/>
            <person name="Beanan M.J."/>
            <person name="Dodson R.J."/>
            <person name="Daugherty S.C."/>
            <person name="Madupu R."/>
            <person name="Angiuoli S.V."/>
            <person name="Durkin A.S."/>
            <person name="Haft D.H."/>
            <person name="Vamathevan J.J."/>
            <person name="Khouri H."/>
            <person name="Utterback T.R."/>
            <person name="Lee C."/>
            <person name="Dimitrov G."/>
            <person name="Jiang L."/>
            <person name="Qin H."/>
            <person name="Weidman J."/>
            <person name="Tran K."/>
            <person name="Kang K.H."/>
            <person name="Hance I.R."/>
            <person name="Nelson K.E."/>
            <person name="Fraser C.M."/>
        </authorList>
    </citation>
    <scope>NUCLEOTIDE SEQUENCE [LARGE SCALE GENOMIC DNA]</scope>
    <source>
        <strain>ATCC 35984 / DSM 28319 / BCRC 17069 / CCUG 31568 / BM 3577 / RP62A</strain>
    </source>
</reference>
<keyword id="KW-1185">Reference proteome</keyword>